<evidence type="ECO:0000255" key="1">
    <source>
        <dbReference type="HAMAP-Rule" id="MF_01629"/>
    </source>
</evidence>
<dbReference type="EC" id="1.4.3.5" evidence="1"/>
<dbReference type="EMBL" id="CP000806">
    <property type="protein sequence ID" value="ACB50148.1"/>
    <property type="molecule type" value="Genomic_DNA"/>
</dbReference>
<dbReference type="RefSeq" id="WP_009546036.1">
    <property type="nucleotide sequence ID" value="NC_010546.1"/>
</dbReference>
<dbReference type="SMR" id="B1WR90"/>
<dbReference type="STRING" id="43989.cce_0797"/>
<dbReference type="KEGG" id="cyt:cce_0797"/>
<dbReference type="eggNOG" id="COG0259">
    <property type="taxonomic scope" value="Bacteria"/>
</dbReference>
<dbReference type="HOGENOM" id="CLU_032263_2_2_3"/>
<dbReference type="OrthoDB" id="9780392at2"/>
<dbReference type="UniPathway" id="UPA01068">
    <property type="reaction ID" value="UER00304"/>
</dbReference>
<dbReference type="UniPathway" id="UPA01068">
    <property type="reaction ID" value="UER00305"/>
</dbReference>
<dbReference type="Proteomes" id="UP000001203">
    <property type="component" value="Chromosome circular"/>
</dbReference>
<dbReference type="GO" id="GO:0010181">
    <property type="term" value="F:FMN binding"/>
    <property type="evidence" value="ECO:0007669"/>
    <property type="project" value="UniProtKB-UniRule"/>
</dbReference>
<dbReference type="GO" id="GO:0004733">
    <property type="term" value="F:pyridoxamine phosphate oxidase activity"/>
    <property type="evidence" value="ECO:0007669"/>
    <property type="project" value="UniProtKB-UniRule"/>
</dbReference>
<dbReference type="GO" id="GO:0008615">
    <property type="term" value="P:pyridoxine biosynthetic process"/>
    <property type="evidence" value="ECO:0007669"/>
    <property type="project" value="UniProtKB-KW"/>
</dbReference>
<dbReference type="FunFam" id="2.30.110.10:FF:000005">
    <property type="entry name" value="NAD(P)H-hydrate epimerase"/>
    <property type="match status" value="1"/>
</dbReference>
<dbReference type="Gene3D" id="2.30.110.10">
    <property type="entry name" value="Electron Transport, Fmn-binding Protein, Chain A"/>
    <property type="match status" value="1"/>
</dbReference>
<dbReference type="HAMAP" id="MF_01629">
    <property type="entry name" value="PdxH"/>
    <property type="match status" value="1"/>
</dbReference>
<dbReference type="InterPro" id="IPR000659">
    <property type="entry name" value="Pyridox_Oxase"/>
</dbReference>
<dbReference type="InterPro" id="IPR019740">
    <property type="entry name" value="Pyridox_Oxase_CS"/>
</dbReference>
<dbReference type="InterPro" id="IPR011576">
    <property type="entry name" value="Pyridox_Oxase_N"/>
</dbReference>
<dbReference type="InterPro" id="IPR019576">
    <property type="entry name" value="Pyridoxamine_oxidase_dimer_C"/>
</dbReference>
<dbReference type="InterPro" id="IPR012349">
    <property type="entry name" value="Split_barrel_FMN-bd"/>
</dbReference>
<dbReference type="NCBIfam" id="TIGR00558">
    <property type="entry name" value="pdxH"/>
    <property type="match status" value="1"/>
</dbReference>
<dbReference type="NCBIfam" id="NF004231">
    <property type="entry name" value="PRK05679.1"/>
    <property type="match status" value="1"/>
</dbReference>
<dbReference type="PANTHER" id="PTHR10851:SF0">
    <property type="entry name" value="PYRIDOXINE-5'-PHOSPHATE OXIDASE"/>
    <property type="match status" value="1"/>
</dbReference>
<dbReference type="PANTHER" id="PTHR10851">
    <property type="entry name" value="PYRIDOXINE-5-PHOSPHATE OXIDASE"/>
    <property type="match status" value="1"/>
</dbReference>
<dbReference type="Pfam" id="PF10590">
    <property type="entry name" value="PNP_phzG_C"/>
    <property type="match status" value="1"/>
</dbReference>
<dbReference type="Pfam" id="PF01243">
    <property type="entry name" value="PNPOx_N"/>
    <property type="match status" value="1"/>
</dbReference>
<dbReference type="PIRSF" id="PIRSF000190">
    <property type="entry name" value="Pyd_amn-ph_oxd"/>
    <property type="match status" value="1"/>
</dbReference>
<dbReference type="SUPFAM" id="SSF50475">
    <property type="entry name" value="FMN-binding split barrel"/>
    <property type="match status" value="1"/>
</dbReference>
<dbReference type="PROSITE" id="PS01064">
    <property type="entry name" value="PYRIDOX_OXIDASE"/>
    <property type="match status" value="1"/>
</dbReference>
<name>PDXH_CROS5</name>
<accession>B1WR90</accession>
<sequence length="214" mass="24939">MDLTALREEYTRHGLTRDDLEDNPFKQFEKWFQQATEAELSEPNAMSLATASAKGEPSIRTVLLKYFDEKGFVFFTNYESRKAQQIEENPHVALLFLWLPLERQVKIQGTATKVSTAESLNYFTSRPRGSQLGAWCSAQSSVISSRKLLEMKFEELKYKFQHGEIPLPSFWGGYRVKPTRFEFWQGRPNRLHDRFSYTLTETDDTTWGIHRLAP</sequence>
<feature type="chain" id="PRO_1000186300" description="Pyridoxine/pyridoxamine 5'-phosphate oxidase">
    <location>
        <begin position="1"/>
        <end position="214"/>
    </location>
</feature>
<feature type="binding site" evidence="1">
    <location>
        <begin position="7"/>
        <end position="10"/>
    </location>
    <ligand>
        <name>substrate</name>
    </ligand>
</feature>
<feature type="binding site" evidence="1">
    <location>
        <begin position="60"/>
        <end position="65"/>
    </location>
    <ligand>
        <name>FMN</name>
        <dbReference type="ChEBI" id="CHEBI:58210"/>
    </ligand>
</feature>
<feature type="binding site" evidence="1">
    <location>
        <position position="65"/>
    </location>
    <ligand>
        <name>substrate</name>
    </ligand>
</feature>
<feature type="binding site" evidence="1">
    <location>
        <begin position="75"/>
        <end position="76"/>
    </location>
    <ligand>
        <name>FMN</name>
        <dbReference type="ChEBI" id="CHEBI:58210"/>
    </ligand>
</feature>
<feature type="binding site" evidence="1">
    <location>
        <position position="81"/>
    </location>
    <ligand>
        <name>FMN</name>
        <dbReference type="ChEBI" id="CHEBI:58210"/>
    </ligand>
</feature>
<feature type="binding site" evidence="1">
    <location>
        <position position="82"/>
    </location>
    <ligand>
        <name>FMN</name>
        <dbReference type="ChEBI" id="CHEBI:58210"/>
    </ligand>
</feature>
<feature type="binding site" evidence="1">
    <location>
        <position position="104"/>
    </location>
    <ligand>
        <name>FMN</name>
        <dbReference type="ChEBI" id="CHEBI:58210"/>
    </ligand>
</feature>
<feature type="binding site" evidence="1">
    <location>
        <position position="122"/>
    </location>
    <ligand>
        <name>substrate</name>
    </ligand>
</feature>
<feature type="binding site" evidence="1">
    <location>
        <position position="126"/>
    </location>
    <ligand>
        <name>substrate</name>
    </ligand>
</feature>
<feature type="binding site" evidence="1">
    <location>
        <position position="130"/>
    </location>
    <ligand>
        <name>substrate</name>
    </ligand>
</feature>
<feature type="binding site" evidence="1">
    <location>
        <begin position="139"/>
        <end position="140"/>
    </location>
    <ligand>
        <name>FMN</name>
        <dbReference type="ChEBI" id="CHEBI:58210"/>
    </ligand>
</feature>
<feature type="binding site" evidence="1">
    <location>
        <position position="184"/>
    </location>
    <ligand>
        <name>FMN</name>
        <dbReference type="ChEBI" id="CHEBI:58210"/>
    </ligand>
</feature>
<feature type="binding site" evidence="1">
    <location>
        <begin position="190"/>
        <end position="192"/>
    </location>
    <ligand>
        <name>substrate</name>
    </ligand>
</feature>
<feature type="binding site" evidence="1">
    <location>
        <position position="194"/>
    </location>
    <ligand>
        <name>FMN</name>
        <dbReference type="ChEBI" id="CHEBI:58210"/>
    </ligand>
</feature>
<gene>
    <name evidence="1" type="primary">pdxH</name>
    <name type="ordered locus">cce_0797</name>
</gene>
<keyword id="KW-0285">Flavoprotein</keyword>
<keyword id="KW-0288">FMN</keyword>
<keyword id="KW-0560">Oxidoreductase</keyword>
<keyword id="KW-0664">Pyridoxine biosynthesis</keyword>
<keyword id="KW-1185">Reference proteome</keyword>
<organism>
    <name type="scientific">Crocosphaera subtropica (strain ATCC 51142 / BH68)</name>
    <name type="common">Cyanothece sp. (strain ATCC 51142)</name>
    <dbReference type="NCBI Taxonomy" id="43989"/>
    <lineage>
        <taxon>Bacteria</taxon>
        <taxon>Bacillati</taxon>
        <taxon>Cyanobacteriota</taxon>
        <taxon>Cyanophyceae</taxon>
        <taxon>Oscillatoriophycideae</taxon>
        <taxon>Chroococcales</taxon>
        <taxon>Aphanothecaceae</taxon>
        <taxon>Crocosphaera</taxon>
        <taxon>Crocosphaera subtropica</taxon>
    </lineage>
</organism>
<protein>
    <recommendedName>
        <fullName evidence="1">Pyridoxine/pyridoxamine 5'-phosphate oxidase</fullName>
        <ecNumber evidence="1">1.4.3.5</ecNumber>
    </recommendedName>
    <alternativeName>
        <fullName evidence="1">PNP/PMP oxidase</fullName>
        <shortName evidence="1">PNPOx</shortName>
    </alternativeName>
    <alternativeName>
        <fullName evidence="1">Pyridoxal 5'-phosphate synthase</fullName>
    </alternativeName>
</protein>
<reference key="1">
    <citation type="journal article" date="2008" name="Proc. Natl. Acad. Sci. U.S.A.">
        <title>The genome of Cyanothece 51142, a unicellular diazotrophic cyanobacterium important in the marine nitrogen cycle.</title>
        <authorList>
            <person name="Welsh E.A."/>
            <person name="Liberton M."/>
            <person name="Stoeckel J."/>
            <person name="Loh T."/>
            <person name="Elvitigala T."/>
            <person name="Wang C."/>
            <person name="Wollam A."/>
            <person name="Fulton R.S."/>
            <person name="Clifton S.W."/>
            <person name="Jacobs J.M."/>
            <person name="Aurora R."/>
            <person name="Ghosh B.K."/>
            <person name="Sherman L.A."/>
            <person name="Smith R.D."/>
            <person name="Wilson R.K."/>
            <person name="Pakrasi H.B."/>
        </authorList>
    </citation>
    <scope>NUCLEOTIDE SEQUENCE [LARGE SCALE GENOMIC DNA]</scope>
    <source>
        <strain>ATCC 51142 / BH68</strain>
    </source>
</reference>
<proteinExistence type="inferred from homology"/>
<comment type="function">
    <text evidence="1">Catalyzes the oxidation of either pyridoxine 5'-phosphate (PNP) or pyridoxamine 5'-phosphate (PMP) into pyridoxal 5'-phosphate (PLP).</text>
</comment>
<comment type="catalytic activity">
    <reaction evidence="1">
        <text>pyridoxamine 5'-phosphate + O2 + H2O = pyridoxal 5'-phosphate + H2O2 + NH4(+)</text>
        <dbReference type="Rhea" id="RHEA:15817"/>
        <dbReference type="ChEBI" id="CHEBI:15377"/>
        <dbReference type="ChEBI" id="CHEBI:15379"/>
        <dbReference type="ChEBI" id="CHEBI:16240"/>
        <dbReference type="ChEBI" id="CHEBI:28938"/>
        <dbReference type="ChEBI" id="CHEBI:58451"/>
        <dbReference type="ChEBI" id="CHEBI:597326"/>
        <dbReference type="EC" id="1.4.3.5"/>
    </reaction>
</comment>
<comment type="catalytic activity">
    <reaction evidence="1">
        <text>pyridoxine 5'-phosphate + O2 = pyridoxal 5'-phosphate + H2O2</text>
        <dbReference type="Rhea" id="RHEA:15149"/>
        <dbReference type="ChEBI" id="CHEBI:15379"/>
        <dbReference type="ChEBI" id="CHEBI:16240"/>
        <dbReference type="ChEBI" id="CHEBI:58589"/>
        <dbReference type="ChEBI" id="CHEBI:597326"/>
        <dbReference type="EC" id="1.4.3.5"/>
    </reaction>
</comment>
<comment type="cofactor">
    <cofactor evidence="1">
        <name>FMN</name>
        <dbReference type="ChEBI" id="CHEBI:58210"/>
    </cofactor>
    <text evidence="1">Binds 1 FMN per subunit.</text>
</comment>
<comment type="pathway">
    <text evidence="1">Cofactor metabolism; pyridoxal 5'-phosphate salvage; pyridoxal 5'-phosphate from pyridoxamine 5'-phosphate: step 1/1.</text>
</comment>
<comment type="pathway">
    <text evidence="1">Cofactor metabolism; pyridoxal 5'-phosphate salvage; pyridoxal 5'-phosphate from pyridoxine 5'-phosphate: step 1/1.</text>
</comment>
<comment type="subunit">
    <text evidence="1">Homodimer.</text>
</comment>
<comment type="similarity">
    <text evidence="1">Belongs to the pyridoxamine 5'-phosphate oxidase family.</text>
</comment>